<proteinExistence type="inferred from homology"/>
<dbReference type="EC" id="1.1.5.3" evidence="1"/>
<dbReference type="EMBL" id="AE016796">
    <property type="protein sequence ID" value="AAO06991.1"/>
    <property type="molecule type" value="Genomic_DNA"/>
</dbReference>
<dbReference type="RefSeq" id="WP_011081006.1">
    <property type="nucleotide sequence ID" value="NC_004460.2"/>
</dbReference>
<dbReference type="KEGG" id="vvu:VV2_0011"/>
<dbReference type="HOGENOM" id="CLU_047793_0_0_6"/>
<dbReference type="UniPathway" id="UPA00618">
    <property type="reaction ID" value="UER00673"/>
</dbReference>
<dbReference type="Proteomes" id="UP000002275">
    <property type="component" value="Chromosome 2"/>
</dbReference>
<dbReference type="GO" id="GO:0009331">
    <property type="term" value="C:glycerol-3-phosphate dehydrogenase (FAD) complex"/>
    <property type="evidence" value="ECO:0007669"/>
    <property type="project" value="InterPro"/>
</dbReference>
<dbReference type="GO" id="GO:0004368">
    <property type="term" value="F:glycerol-3-phosphate dehydrogenase (quinone) activity"/>
    <property type="evidence" value="ECO:0007669"/>
    <property type="project" value="UniProtKB-UniRule"/>
</dbReference>
<dbReference type="GO" id="GO:0019563">
    <property type="term" value="P:glycerol catabolic process"/>
    <property type="evidence" value="ECO:0007669"/>
    <property type="project" value="UniProtKB-UniRule"/>
</dbReference>
<dbReference type="Gene3D" id="3.50.50.60">
    <property type="entry name" value="FAD/NAD(P)-binding domain"/>
    <property type="match status" value="1"/>
</dbReference>
<dbReference type="HAMAP" id="MF_00753">
    <property type="entry name" value="Glycerol3P_GlpB"/>
    <property type="match status" value="1"/>
</dbReference>
<dbReference type="InterPro" id="IPR003953">
    <property type="entry name" value="FAD-dep_OxRdtase_2_FAD-bd"/>
</dbReference>
<dbReference type="InterPro" id="IPR036188">
    <property type="entry name" value="FAD/NAD-bd_sf"/>
</dbReference>
<dbReference type="InterPro" id="IPR009158">
    <property type="entry name" value="G3P_DH_GlpB_su"/>
</dbReference>
<dbReference type="InterPro" id="IPR051691">
    <property type="entry name" value="Metab_Enz_Cyan_OpOx_G3PDH"/>
</dbReference>
<dbReference type="NCBIfam" id="TIGR03378">
    <property type="entry name" value="glycerol3P_GlpB"/>
    <property type="match status" value="1"/>
</dbReference>
<dbReference type="NCBIfam" id="NF003719">
    <property type="entry name" value="PRK05329.1-2"/>
    <property type="match status" value="1"/>
</dbReference>
<dbReference type="NCBIfam" id="NF003720">
    <property type="entry name" value="PRK05329.1-3"/>
    <property type="match status" value="1"/>
</dbReference>
<dbReference type="PANTHER" id="PTHR42949">
    <property type="entry name" value="ANAEROBIC GLYCEROL-3-PHOSPHATE DEHYDROGENASE SUBUNIT B"/>
    <property type="match status" value="1"/>
</dbReference>
<dbReference type="PANTHER" id="PTHR42949:SF3">
    <property type="entry name" value="ANAEROBIC GLYCEROL-3-PHOSPHATE DEHYDROGENASE SUBUNIT B"/>
    <property type="match status" value="1"/>
</dbReference>
<dbReference type="Pfam" id="PF00890">
    <property type="entry name" value="FAD_binding_2"/>
    <property type="match status" value="1"/>
</dbReference>
<dbReference type="PIRSF" id="PIRSF000141">
    <property type="entry name" value="Anaerobic_G3P_dh"/>
    <property type="match status" value="1"/>
</dbReference>
<dbReference type="SUPFAM" id="SSF51905">
    <property type="entry name" value="FAD/NAD(P)-binding domain"/>
    <property type="match status" value="1"/>
</dbReference>
<name>GLPB_VIBVU</name>
<organism>
    <name type="scientific">Vibrio vulnificus (strain CMCP6)</name>
    <dbReference type="NCBI Taxonomy" id="216895"/>
    <lineage>
        <taxon>Bacteria</taxon>
        <taxon>Pseudomonadati</taxon>
        <taxon>Pseudomonadota</taxon>
        <taxon>Gammaproteobacteria</taxon>
        <taxon>Vibrionales</taxon>
        <taxon>Vibrionaceae</taxon>
        <taxon>Vibrio</taxon>
    </lineage>
</organism>
<protein>
    <recommendedName>
        <fullName evidence="1">Anaerobic glycerol-3-phosphate dehydrogenase subunit B</fullName>
        <shortName evidence="1">Anaerobic G-3-P dehydrogenase subunit B</shortName>
        <shortName evidence="1">Anaerobic G3Pdhase B</shortName>
        <ecNumber evidence="1">1.1.5.3</ecNumber>
    </recommendedName>
</protein>
<accession>Q8D7Y4</accession>
<evidence type="ECO:0000255" key="1">
    <source>
        <dbReference type="HAMAP-Rule" id="MF_00753"/>
    </source>
</evidence>
<gene>
    <name evidence="1" type="primary">glpB</name>
    <name type="ordered locus">VV2_0011</name>
</gene>
<reference key="1">
    <citation type="submission" date="2002-12" db="EMBL/GenBank/DDBJ databases">
        <title>Complete genome sequence of Vibrio vulnificus CMCP6.</title>
        <authorList>
            <person name="Rhee J.H."/>
            <person name="Kim S.Y."/>
            <person name="Chung S.S."/>
            <person name="Kim J.J."/>
            <person name="Moon Y.H."/>
            <person name="Jeong H."/>
            <person name="Choy H.E."/>
        </authorList>
    </citation>
    <scope>NUCLEOTIDE SEQUENCE [LARGE SCALE GENOMIC DNA]</scope>
    <source>
        <strain>CMCP6</strain>
    </source>
</reference>
<sequence length="438" mass="48404">MLNYDIAVIGGGIAGYCAALNAIEAGKKTVLISQGQSALHFSSGSIDVMAKTPSGERVEAPFSAMASLPQQHPEHPYSKMLPNFVRQSLYWLVDQLKEQGLPLHCQQDESNHYRITPLGTLKATWLSQPFVYQHRQNVAFKRLLFVAVDGYRDFQPLLAKDNLKKHPDFQHCEIGEIQVTIPGCEALRRNPNELRSIDIARLLKQPQAFNSLCHQLMKHATQEDLVIMPAIMGNGDGLVLLQQLRRQTNLTLHEVPTMPPSLLGIRIEEALQKRFLKQGGVLLKGDQVLSGEWDEQGHLTSISTRNLGDIPLHAQAYILASGSYFSQGLKASLDKIVEPIFGLDMVAKPHRRQWRNDQFFSASAHPFMAFGVETDAMFRPSLNGQVCQNLYCCGSVLSGYDPVFEGSGGGVAVSTALAAVQRAMGLKQAMSVEEECVL</sequence>
<comment type="function">
    <text evidence="1">Conversion of glycerol 3-phosphate to dihydroxyacetone. Uses fumarate or nitrate as electron acceptor.</text>
</comment>
<comment type="catalytic activity">
    <reaction evidence="1">
        <text>a quinone + sn-glycerol 3-phosphate = dihydroxyacetone phosphate + a quinol</text>
        <dbReference type="Rhea" id="RHEA:18977"/>
        <dbReference type="ChEBI" id="CHEBI:24646"/>
        <dbReference type="ChEBI" id="CHEBI:57597"/>
        <dbReference type="ChEBI" id="CHEBI:57642"/>
        <dbReference type="ChEBI" id="CHEBI:132124"/>
        <dbReference type="EC" id="1.1.5.3"/>
    </reaction>
</comment>
<comment type="cofactor">
    <cofactor evidence="1">
        <name>FMN</name>
        <dbReference type="ChEBI" id="CHEBI:58210"/>
    </cofactor>
</comment>
<comment type="pathway">
    <text evidence="1">Polyol metabolism; glycerol degradation via glycerol kinase pathway; glycerone phosphate from sn-glycerol 3-phosphate (anaerobic route): step 1/1.</text>
</comment>
<comment type="subunit">
    <text evidence="1">Composed of a catalytic GlpA/B dimer and of membrane bound GlpC.</text>
</comment>
<comment type="similarity">
    <text evidence="1">Belongs to the anaerobic G-3-P dehydrogenase subunit B family.</text>
</comment>
<keyword id="KW-0285">Flavoprotein</keyword>
<keyword id="KW-0288">FMN</keyword>
<keyword id="KW-0560">Oxidoreductase</keyword>
<feature type="chain" id="PRO_0000204569" description="Anaerobic glycerol-3-phosphate dehydrogenase subunit B">
    <location>
        <begin position="1"/>
        <end position="438"/>
    </location>
</feature>